<gene>
    <name evidence="1" type="primary">rppH</name>
    <name evidence="1" type="synonym">nudH</name>
    <name type="ordered locus">AZC_4090</name>
</gene>
<keyword id="KW-0378">Hydrolase</keyword>
<keyword id="KW-1185">Reference proteome</keyword>
<name>RPPH_AZOC5</name>
<evidence type="ECO:0000255" key="1">
    <source>
        <dbReference type="HAMAP-Rule" id="MF_00298"/>
    </source>
</evidence>
<feature type="chain" id="PRO_1000078951" description="RNA pyrophosphohydrolase">
    <location>
        <begin position="1"/>
        <end position="168"/>
    </location>
</feature>
<feature type="domain" description="Nudix hydrolase" evidence="1">
    <location>
        <begin position="8"/>
        <end position="160"/>
    </location>
</feature>
<feature type="short sequence motif" description="Nudix box">
    <location>
        <begin position="47"/>
        <end position="68"/>
    </location>
</feature>
<accession>A8HRT0</accession>
<sequence>MTRLEDLPYRPCVGLAIFNRAGQVFLGQRLSGPEHVDATHSWQMPQGGIDKGEEPYEAALRELYEETSIRSVVKLGEVEDWLSYDLPGRVAGEAWKGKYRGQTQKWFALRFTGDEGEIDILKPGGGAHKAEFCNWRWDALDRAAELVIPFKRQVYERVAREFRRFAHD</sequence>
<proteinExistence type="inferred from homology"/>
<organism>
    <name type="scientific">Azorhizobium caulinodans (strain ATCC 43989 / DSM 5975 / JCM 20966 / LMG 6465 / NBRC 14845 / NCIMB 13405 / ORS 571)</name>
    <dbReference type="NCBI Taxonomy" id="438753"/>
    <lineage>
        <taxon>Bacteria</taxon>
        <taxon>Pseudomonadati</taxon>
        <taxon>Pseudomonadota</taxon>
        <taxon>Alphaproteobacteria</taxon>
        <taxon>Hyphomicrobiales</taxon>
        <taxon>Xanthobacteraceae</taxon>
        <taxon>Azorhizobium</taxon>
    </lineage>
</organism>
<dbReference type="EC" id="3.6.1.-" evidence="1"/>
<dbReference type="EMBL" id="AP009384">
    <property type="protein sequence ID" value="BAF90088.1"/>
    <property type="molecule type" value="Genomic_DNA"/>
</dbReference>
<dbReference type="RefSeq" id="WP_012172610.1">
    <property type="nucleotide sequence ID" value="NC_009937.1"/>
</dbReference>
<dbReference type="SMR" id="A8HRT0"/>
<dbReference type="STRING" id="438753.AZC_4090"/>
<dbReference type="KEGG" id="azc:AZC_4090"/>
<dbReference type="eggNOG" id="COG0494">
    <property type="taxonomic scope" value="Bacteria"/>
</dbReference>
<dbReference type="HOGENOM" id="CLU_087195_3_0_5"/>
<dbReference type="Proteomes" id="UP000000270">
    <property type="component" value="Chromosome"/>
</dbReference>
<dbReference type="GO" id="GO:0034432">
    <property type="term" value="F:bis(5'-adenosyl)-pentaphosphatase activity"/>
    <property type="evidence" value="ECO:0007669"/>
    <property type="project" value="TreeGrafter"/>
</dbReference>
<dbReference type="GO" id="GO:0008893">
    <property type="term" value="F:guanosine-3',5'-bis(diphosphate) 3'-diphosphatase activity"/>
    <property type="evidence" value="ECO:0007669"/>
    <property type="project" value="TreeGrafter"/>
</dbReference>
<dbReference type="GO" id="GO:0006753">
    <property type="term" value="P:nucleoside phosphate metabolic process"/>
    <property type="evidence" value="ECO:0007669"/>
    <property type="project" value="TreeGrafter"/>
</dbReference>
<dbReference type="GO" id="GO:0019693">
    <property type="term" value="P:ribose phosphate metabolic process"/>
    <property type="evidence" value="ECO:0007669"/>
    <property type="project" value="TreeGrafter"/>
</dbReference>
<dbReference type="CDD" id="cd03671">
    <property type="entry name" value="NUDIX_Ap4A_hydrolase_plant_like"/>
    <property type="match status" value="1"/>
</dbReference>
<dbReference type="Gene3D" id="3.90.79.10">
    <property type="entry name" value="Nucleoside Triphosphate Pyrophosphohydrolase"/>
    <property type="match status" value="1"/>
</dbReference>
<dbReference type="HAMAP" id="MF_00298">
    <property type="entry name" value="Nudix_RppH"/>
    <property type="match status" value="1"/>
</dbReference>
<dbReference type="InterPro" id="IPR020476">
    <property type="entry name" value="Nudix_hydrolase"/>
</dbReference>
<dbReference type="InterPro" id="IPR015797">
    <property type="entry name" value="NUDIX_hydrolase-like_dom_sf"/>
</dbReference>
<dbReference type="InterPro" id="IPR000086">
    <property type="entry name" value="NUDIX_hydrolase_dom"/>
</dbReference>
<dbReference type="InterPro" id="IPR022927">
    <property type="entry name" value="RppH"/>
</dbReference>
<dbReference type="NCBIfam" id="NF001938">
    <property type="entry name" value="PRK00714.1-5"/>
    <property type="match status" value="1"/>
</dbReference>
<dbReference type="PANTHER" id="PTHR11839:SF22">
    <property type="entry name" value="NUDIX HYDROLASE 26, CHLOROPLASTIC"/>
    <property type="match status" value="1"/>
</dbReference>
<dbReference type="PANTHER" id="PTHR11839">
    <property type="entry name" value="UDP/ADP-SUGAR PYROPHOSPHATASE"/>
    <property type="match status" value="1"/>
</dbReference>
<dbReference type="Pfam" id="PF00293">
    <property type="entry name" value="NUDIX"/>
    <property type="match status" value="1"/>
</dbReference>
<dbReference type="PRINTS" id="PR00502">
    <property type="entry name" value="NUDIXFAMILY"/>
</dbReference>
<dbReference type="SUPFAM" id="SSF55811">
    <property type="entry name" value="Nudix"/>
    <property type="match status" value="1"/>
</dbReference>
<dbReference type="PROSITE" id="PS51462">
    <property type="entry name" value="NUDIX"/>
    <property type="match status" value="1"/>
</dbReference>
<comment type="function">
    <text evidence="1">Accelerates the degradation of transcripts by removing pyrophosphate from the 5'-end of triphosphorylated RNA, leading to a more labile monophosphorylated state that can stimulate subsequent ribonuclease cleavage.</text>
</comment>
<comment type="cofactor">
    <cofactor evidence="1">
        <name>a divalent metal cation</name>
        <dbReference type="ChEBI" id="CHEBI:60240"/>
    </cofactor>
</comment>
<comment type="similarity">
    <text evidence="1">Belongs to the Nudix hydrolase family. RppH subfamily.</text>
</comment>
<protein>
    <recommendedName>
        <fullName evidence="1">RNA pyrophosphohydrolase</fullName>
        <ecNumber evidence="1">3.6.1.-</ecNumber>
    </recommendedName>
    <alternativeName>
        <fullName evidence="1">(Di)nucleoside polyphosphate hydrolase</fullName>
    </alternativeName>
</protein>
<reference key="1">
    <citation type="submission" date="2007-04" db="EMBL/GenBank/DDBJ databases">
        <title>Complete genome sequence of the nitrogen-fixing bacterium Azorhizobium caulinodans ORS571.</title>
        <authorList>
            <person name="Lee K.B."/>
            <person name="Backer P.D."/>
            <person name="Aono T."/>
            <person name="Liu C.T."/>
            <person name="Suzuki S."/>
            <person name="Suzuki T."/>
            <person name="Kaneko T."/>
            <person name="Yamada M."/>
            <person name="Tabata S."/>
            <person name="Kupfer D.M."/>
            <person name="Najar F.Z."/>
            <person name="Wiley G.B."/>
            <person name="Roe B."/>
            <person name="Binnewies T."/>
            <person name="Ussery D."/>
            <person name="Vereecke D."/>
            <person name="Gevers D."/>
            <person name="Holsters M."/>
            <person name="Oyaizu H."/>
        </authorList>
    </citation>
    <scope>NUCLEOTIDE SEQUENCE [LARGE SCALE GENOMIC DNA]</scope>
    <source>
        <strain>ATCC 43989 / DSM 5975 / JCM 20966 / LMG 6465 / NBRC 14845 / NCIMB 13405 / ORS 571</strain>
    </source>
</reference>